<feature type="chain" id="PRO_1000049849" description="3-hydroxyacyl-[acyl-carrier-protein] dehydratase FabZ">
    <location>
        <begin position="1"/>
        <end position="150"/>
    </location>
</feature>
<feature type="active site" evidence="1">
    <location>
        <position position="51"/>
    </location>
</feature>
<dbReference type="EC" id="4.2.1.59" evidence="1"/>
<dbReference type="EMBL" id="CP000675">
    <property type="protein sequence ID" value="ABQ56737.1"/>
    <property type="molecule type" value="Genomic_DNA"/>
</dbReference>
<dbReference type="RefSeq" id="WP_011213137.1">
    <property type="nucleotide sequence ID" value="NZ_JAPMSS010000006.1"/>
</dbReference>
<dbReference type="SMR" id="A5IH87"/>
<dbReference type="KEGG" id="lpc:LPC_2836"/>
<dbReference type="HOGENOM" id="CLU_078912_1_2_6"/>
<dbReference type="GO" id="GO:0005737">
    <property type="term" value="C:cytoplasm"/>
    <property type="evidence" value="ECO:0007669"/>
    <property type="project" value="UniProtKB-SubCell"/>
</dbReference>
<dbReference type="GO" id="GO:0016020">
    <property type="term" value="C:membrane"/>
    <property type="evidence" value="ECO:0007669"/>
    <property type="project" value="GOC"/>
</dbReference>
<dbReference type="GO" id="GO:0019171">
    <property type="term" value="F:(3R)-hydroxyacyl-[acyl-carrier-protein] dehydratase activity"/>
    <property type="evidence" value="ECO:0007669"/>
    <property type="project" value="UniProtKB-EC"/>
</dbReference>
<dbReference type="GO" id="GO:0006633">
    <property type="term" value="P:fatty acid biosynthetic process"/>
    <property type="evidence" value="ECO:0007669"/>
    <property type="project" value="UniProtKB-UniRule"/>
</dbReference>
<dbReference type="GO" id="GO:0009245">
    <property type="term" value="P:lipid A biosynthetic process"/>
    <property type="evidence" value="ECO:0007669"/>
    <property type="project" value="UniProtKB-UniRule"/>
</dbReference>
<dbReference type="CDD" id="cd01288">
    <property type="entry name" value="FabZ"/>
    <property type="match status" value="1"/>
</dbReference>
<dbReference type="FunFam" id="3.10.129.10:FF:000001">
    <property type="entry name" value="3-hydroxyacyl-[acyl-carrier-protein] dehydratase FabZ"/>
    <property type="match status" value="1"/>
</dbReference>
<dbReference type="Gene3D" id="3.10.129.10">
    <property type="entry name" value="Hotdog Thioesterase"/>
    <property type="match status" value="1"/>
</dbReference>
<dbReference type="HAMAP" id="MF_00406">
    <property type="entry name" value="FabZ"/>
    <property type="match status" value="1"/>
</dbReference>
<dbReference type="InterPro" id="IPR013114">
    <property type="entry name" value="FabA_FabZ"/>
</dbReference>
<dbReference type="InterPro" id="IPR010084">
    <property type="entry name" value="FabZ"/>
</dbReference>
<dbReference type="InterPro" id="IPR029069">
    <property type="entry name" value="HotDog_dom_sf"/>
</dbReference>
<dbReference type="NCBIfam" id="TIGR01750">
    <property type="entry name" value="fabZ"/>
    <property type="match status" value="1"/>
</dbReference>
<dbReference type="NCBIfam" id="NF000582">
    <property type="entry name" value="PRK00006.1"/>
    <property type="match status" value="1"/>
</dbReference>
<dbReference type="PANTHER" id="PTHR30272">
    <property type="entry name" value="3-HYDROXYACYL-[ACYL-CARRIER-PROTEIN] DEHYDRATASE"/>
    <property type="match status" value="1"/>
</dbReference>
<dbReference type="PANTHER" id="PTHR30272:SF1">
    <property type="entry name" value="3-HYDROXYACYL-[ACYL-CARRIER-PROTEIN] DEHYDRATASE"/>
    <property type="match status" value="1"/>
</dbReference>
<dbReference type="Pfam" id="PF07977">
    <property type="entry name" value="FabA"/>
    <property type="match status" value="1"/>
</dbReference>
<dbReference type="SUPFAM" id="SSF54637">
    <property type="entry name" value="Thioesterase/thiol ester dehydrase-isomerase"/>
    <property type="match status" value="1"/>
</dbReference>
<organism>
    <name type="scientific">Legionella pneumophila (strain Corby)</name>
    <dbReference type="NCBI Taxonomy" id="400673"/>
    <lineage>
        <taxon>Bacteria</taxon>
        <taxon>Pseudomonadati</taxon>
        <taxon>Pseudomonadota</taxon>
        <taxon>Gammaproteobacteria</taxon>
        <taxon>Legionellales</taxon>
        <taxon>Legionellaceae</taxon>
        <taxon>Legionella</taxon>
    </lineage>
</organism>
<name>FABZ_LEGPC</name>
<accession>A5IH87</accession>
<comment type="function">
    <text evidence="1">Involved in unsaturated fatty acids biosynthesis. Catalyzes the dehydration of short chain beta-hydroxyacyl-ACPs and long chain saturated and unsaturated beta-hydroxyacyl-ACPs.</text>
</comment>
<comment type="catalytic activity">
    <reaction evidence="1">
        <text>a (3R)-hydroxyacyl-[ACP] = a (2E)-enoyl-[ACP] + H2O</text>
        <dbReference type="Rhea" id="RHEA:13097"/>
        <dbReference type="Rhea" id="RHEA-COMP:9925"/>
        <dbReference type="Rhea" id="RHEA-COMP:9945"/>
        <dbReference type="ChEBI" id="CHEBI:15377"/>
        <dbReference type="ChEBI" id="CHEBI:78784"/>
        <dbReference type="ChEBI" id="CHEBI:78827"/>
        <dbReference type="EC" id="4.2.1.59"/>
    </reaction>
</comment>
<comment type="subcellular location">
    <subcellularLocation>
        <location evidence="1">Cytoplasm</location>
    </subcellularLocation>
</comment>
<comment type="similarity">
    <text evidence="1">Belongs to the thioester dehydratase family. FabZ subfamily.</text>
</comment>
<proteinExistence type="inferred from homology"/>
<sequence>MNESIDINQIFTLLPHRYPFILVDRVIDYKVMEYLIAIKNVTINENFFTGHFPGNPIMPGVLMLEALAQACGILANLSRQPKEGYEFLHYFAGIDNARFKQVVIPGDQLRLEVRLAGQKRDFWRMHGEAYIGDKLACSADLLSAAKEIKK</sequence>
<keyword id="KW-0963">Cytoplasm</keyword>
<keyword id="KW-0441">Lipid A biosynthesis</keyword>
<keyword id="KW-0444">Lipid biosynthesis</keyword>
<keyword id="KW-0443">Lipid metabolism</keyword>
<keyword id="KW-0456">Lyase</keyword>
<gene>
    <name evidence="1" type="primary">fabZ</name>
    <name type="ordered locus">LPC_2836</name>
</gene>
<protein>
    <recommendedName>
        <fullName evidence="1">3-hydroxyacyl-[acyl-carrier-protein] dehydratase FabZ</fullName>
        <ecNumber evidence="1">4.2.1.59</ecNumber>
    </recommendedName>
    <alternativeName>
        <fullName evidence="1">(3R)-hydroxymyristoyl-[acyl-carrier-protein] dehydratase</fullName>
        <shortName evidence="1">(3R)-hydroxymyristoyl-ACP dehydrase</shortName>
    </alternativeName>
    <alternativeName>
        <fullName evidence="1">Beta-hydroxyacyl-ACP dehydratase</fullName>
    </alternativeName>
</protein>
<evidence type="ECO:0000255" key="1">
    <source>
        <dbReference type="HAMAP-Rule" id="MF_00406"/>
    </source>
</evidence>
<reference key="1">
    <citation type="submission" date="2006-11" db="EMBL/GenBank/DDBJ databases">
        <title>Identification and characterization of a new conjugation/ type IVA secretion system (trb/tra) of L. pneumophila Corby localized on a mobile genomic island.</title>
        <authorList>
            <person name="Gloeckner G."/>
            <person name="Albert-Weissenberger C."/>
            <person name="Weinmann E."/>
            <person name="Jacobi S."/>
            <person name="Schunder E."/>
            <person name="Steinert M."/>
            <person name="Buchrieser C."/>
            <person name="Hacker J."/>
            <person name="Heuner K."/>
        </authorList>
    </citation>
    <scope>NUCLEOTIDE SEQUENCE [LARGE SCALE GENOMIC DNA]</scope>
    <source>
        <strain>Corby</strain>
    </source>
</reference>